<name>VIF_HV1MV</name>
<organismHost>
    <name type="scientific">Homo sapiens</name>
    <name type="common">Human</name>
    <dbReference type="NCBI Taxonomy" id="9606"/>
</organismHost>
<gene>
    <name evidence="2" type="primary">vif</name>
</gene>
<comment type="function">
    <text evidence="2">Counteracts the innate antiviral activity of host APOBEC3F and APOBEC3G by promoting their ubiquitination and degradation. Acts as a substrate recognition component of an E3 ubiquitin-protein ligase complex: mechanistically, Vif hijacks a host cullin-5-RING E3 ubiquitin-protein ligase complex (ECS complex) and the transcription coactivator CBFB/CBF-beta to form an active E3 ubiquitin-protein ligase complex that targets APOBEC3G and APOBEC3F for polyubiquitination, leading to their degradation by the proteasome. Vif interaction with APOBEC3G also blocks its cytidine deaminase activity in a proteasome-independent manner, suggesting a dual inhibitory mechanism. May interact directly with APOBEC3G mRNA in order to inhibit its translation. Association with CBFB/CBF-beta also inhibits the transcription coactivator activity of CBFB/CBF-beta. Seems to play a role in viral morphology by affecting the stability of the viral nucleoprotein core. Finally, Vif also contributes to the G2 cell cycle arrest observed in HIV infected cells.</text>
</comment>
<comment type="subunit">
    <text evidence="1">Homomultimer; in vitro and presumably in vivo. Interacts with viral RNA and Pr55Gag precursor; these interactions mediate Vif incorporation into the virion. Interacts with the viral reverse transcriptase. Forms cullin-5-RING E3 ubiquitin-protein ligase complex (ECS complex) by interacting with host CUL5, RBX2, elongin BC complex (ELOB and ELOC) and CBFB/CBF-beta. Within the ECS complex, Vif interacts directly with host CUL5, ELOC and APOBEC (APOBEC3F and APOBEC3G) substrates. The ECS complex also contains some single-stranded RNA (ssRNA) that acts as a glue that bridges Vif with APOBEC (APOBEC3F and APOBEC3G) substrates. Interacts with host UBCE7IP1 isoform 3/ZIN and possibly with SAT. Interacts with host tyrosine kinases HCK and FYN; these interactions may decrease level of phosphorylated APOBEC3G incorporation into virions. Interacts with host ABCE1; this interaction may play a role in protecting viral RNA from damage during viral assembly. Interacts with host MDM2; this interaction targets Vif for degradation by the proteasome.</text>
</comment>
<comment type="subcellular location">
    <subcellularLocation>
        <location evidence="2">Host cytoplasm</location>
    </subcellularLocation>
    <subcellularLocation>
        <location evidence="2">Host cell membrane</location>
        <topology evidence="2">Peripheral membrane protein</topology>
        <orientation evidence="2">Cytoplasmic side</orientation>
    </subcellularLocation>
    <subcellularLocation>
        <location evidence="2">Virion</location>
    </subcellularLocation>
    <text evidence="2">In the cytoplasm, seems to colocalize with intermediate filament vimentin. A fraction is associated with the cytoplasmic side of cellular membranes, presumably via the interaction with Pr55Gag precursor. Incorporated in virions at a ratio of approximately 7 to 20 molecules per virion.</text>
</comment>
<comment type="induction">
    <text evidence="2">Expressed late during infection in a Rev-dependent manner.</text>
</comment>
<comment type="domain">
    <text evidence="2">The BC-like-box motif mediates the interaction with elongin BC complex.</text>
</comment>
<comment type="domain">
    <text evidence="2">The HCCH motif (H-x(5)-C-x(18)-C-x(5)-H) mediates the interaction with CUL5.</text>
</comment>
<comment type="PTM">
    <text evidence="2">Processed in virion by the viral protease.</text>
</comment>
<comment type="PTM">
    <text evidence="2">Highly phosphorylated on serine and threonine residues.</text>
</comment>
<comment type="PTM">
    <text evidence="2">Polyubiquitinated and degraded by the proteasome in the presence of APOBEC3G.</text>
</comment>
<comment type="miscellaneous">
    <text evidence="2">Vif-defective viruses show catastrophic failure in reverse transcription due to APOBEC-induced mutations that initiate a DNA base repair pathway and compromise the structural integrity of the ssDNA. In the absence of Vif, the virion is morphologically abnormal.</text>
</comment>
<comment type="miscellaneous">
    <text evidence="2">HIV-1 lineages are divided in three main groups, M (for Major), O (for Outlier), and N (for New, or Non-M, Non-O). The vast majority of strains found worldwide belong to the group M. Group O seems to be endemic to and largely confined to Cameroon and neighboring countries in West Central Africa, where these viruses represent a small minority of HIV-1 strains. The group N is represented by a limited number of isolates from Cameroonian persons. The group M is further subdivided in 9 clades or subtypes (A to D, F to H, J and K).</text>
</comment>
<comment type="miscellaneous">
    <text evidence="2">Required for replication in 'nonpermissive' cells, including primary T-cells, macrophages and certain T-cell lines, but is dispensable for replication in 'permissive' cell lines, such as 293T cells. In nonpermissive cells, Vif-defective viruses can produce virions, but they fail to complete reverse transcription and cannot successfully infect new cells.</text>
</comment>
<comment type="similarity">
    <text evidence="2">Belongs to the primate lentivirus group Vif protein family.</text>
</comment>
<organism>
    <name type="scientific">Human immunodeficiency virus type 1 group O (isolate MVP5180)</name>
    <name type="common">HIV-1</name>
    <dbReference type="NCBI Taxonomy" id="388816"/>
    <lineage>
        <taxon>Viruses</taxon>
        <taxon>Riboviria</taxon>
        <taxon>Pararnavirae</taxon>
        <taxon>Artverviricota</taxon>
        <taxon>Revtraviricetes</taxon>
        <taxon>Ortervirales</taxon>
        <taxon>Retroviridae</taxon>
        <taxon>Orthoretrovirinae</taxon>
        <taxon>Lentivirus</taxon>
        <taxon>Human immunodeficiency virus type 1</taxon>
    </lineage>
</organism>
<sequence length="192" mass="22657">MENRWQVLIVWQIDRQKVKAWNSLVKYHKYMSKKAANWRYRHHYESRNPKVSSAVYIPVAEADIVVTTYWGLMPGEREEHLGHGVSIEWQYKEYKTQIDPETADRMIHLHYFTCFTESAIRKAILGQRVLTKCEYLAGHSQVGTLQFLALKAVVKVKRNKPPLPSVQRLTEDRWNKPWKIRDQLGSHSMNGH</sequence>
<dbReference type="EMBL" id="L20571">
    <property type="protein sequence ID" value="AAA44861.1"/>
    <property type="molecule type" value="Genomic_RNA"/>
</dbReference>
<dbReference type="SMR" id="Q79667"/>
<dbReference type="Proteomes" id="UP000007698">
    <property type="component" value="Segment"/>
</dbReference>
<dbReference type="GO" id="GO:0030430">
    <property type="term" value="C:host cell cytoplasm"/>
    <property type="evidence" value="ECO:0007669"/>
    <property type="project" value="UniProtKB-SubCell"/>
</dbReference>
<dbReference type="GO" id="GO:0020002">
    <property type="term" value="C:host cell plasma membrane"/>
    <property type="evidence" value="ECO:0007669"/>
    <property type="project" value="UniProtKB-SubCell"/>
</dbReference>
<dbReference type="GO" id="GO:0016020">
    <property type="term" value="C:membrane"/>
    <property type="evidence" value="ECO:0007669"/>
    <property type="project" value="UniProtKB-UniRule"/>
</dbReference>
<dbReference type="GO" id="GO:0044423">
    <property type="term" value="C:virion component"/>
    <property type="evidence" value="ECO:0007669"/>
    <property type="project" value="UniProtKB-UniRule"/>
</dbReference>
<dbReference type="GO" id="GO:0046872">
    <property type="term" value="F:metal ion binding"/>
    <property type="evidence" value="ECO:0007669"/>
    <property type="project" value="UniProtKB-KW"/>
</dbReference>
<dbReference type="GO" id="GO:0003723">
    <property type="term" value="F:RNA binding"/>
    <property type="evidence" value="ECO:0007669"/>
    <property type="project" value="UniProtKB-UniRule"/>
</dbReference>
<dbReference type="GO" id="GO:0019058">
    <property type="term" value="P:viral life cycle"/>
    <property type="evidence" value="ECO:0007669"/>
    <property type="project" value="InterPro"/>
</dbReference>
<dbReference type="HAMAP" id="MF_04081">
    <property type="entry name" value="HIV_VIF"/>
    <property type="match status" value="1"/>
</dbReference>
<dbReference type="InterPro" id="IPR000475">
    <property type="entry name" value="Vif"/>
</dbReference>
<dbReference type="Pfam" id="PF00559">
    <property type="entry name" value="Vif"/>
    <property type="match status" value="1"/>
</dbReference>
<dbReference type="PRINTS" id="PR00349">
    <property type="entry name" value="VIRIONINFFCT"/>
</dbReference>
<feature type="chain" id="PRO_0000245132" description="Virion infectivity factor" evidence="2">
    <location>
        <begin position="1"/>
        <end position="192"/>
    </location>
</feature>
<feature type="chain" id="PRO_0000245133" description="p17" evidence="2">
    <location>
        <begin position="1"/>
        <end position="150"/>
    </location>
</feature>
<feature type="chain" id="PRO_0000245134" description="p7" evidence="2">
    <location>
        <begin position="151"/>
        <end position="192"/>
    </location>
</feature>
<feature type="region of interest" description="Interaction with host APOBEC3F; F1-box" evidence="2">
    <location>
        <begin position="14"/>
        <end position="17"/>
    </location>
</feature>
<feature type="region of interest" description="Interaction with host APOBEC3G; G-box" evidence="2">
    <location>
        <begin position="40"/>
        <end position="44"/>
    </location>
</feature>
<feature type="region of interest" description="Interaction with host APOBEC3F and APOBEC3G; FG-box" evidence="2">
    <location>
        <begin position="54"/>
        <end position="72"/>
    </location>
</feature>
<feature type="region of interest" description="Interaction with host APOBEC3F; F2-box" evidence="2">
    <location>
        <begin position="74"/>
        <end position="79"/>
    </location>
</feature>
<feature type="region of interest" description="RNA-binding" evidence="2">
    <location>
        <begin position="75"/>
        <end position="114"/>
    </location>
</feature>
<feature type="region of interest" description="SOCS box-like" evidence="2">
    <location>
        <begin position="151"/>
        <end position="180"/>
    </location>
</feature>
<feature type="region of interest" description="Multimerization" evidence="2">
    <location>
        <begin position="151"/>
        <end position="164"/>
    </location>
</feature>
<feature type="region of interest" description="Membrane association" evidence="2">
    <location>
        <begin position="171"/>
        <end position="172"/>
    </location>
</feature>
<feature type="short sequence motif" description="HCCH motif" evidence="2">
    <location>
        <begin position="108"/>
        <end position="139"/>
    </location>
</feature>
<feature type="short sequence motif" description="BC-box-like motif" evidence="2">
    <location>
        <begin position="144"/>
        <end position="153"/>
    </location>
</feature>
<feature type="binding site" evidence="2">
    <location>
        <position position="108"/>
    </location>
    <ligand>
        <name>Zn(2+)</name>
        <dbReference type="ChEBI" id="CHEBI:29105"/>
    </ligand>
</feature>
<feature type="binding site" evidence="2">
    <location>
        <position position="114"/>
    </location>
    <ligand>
        <name>Zn(2+)</name>
        <dbReference type="ChEBI" id="CHEBI:29105"/>
    </ligand>
</feature>
<feature type="binding site" evidence="2">
    <location>
        <position position="133"/>
    </location>
    <ligand>
        <name>Zn(2+)</name>
        <dbReference type="ChEBI" id="CHEBI:29105"/>
    </ligand>
</feature>
<feature type="binding site" evidence="2">
    <location>
        <position position="139"/>
    </location>
    <ligand>
        <name>Zn(2+)</name>
        <dbReference type="ChEBI" id="CHEBI:29105"/>
    </ligand>
</feature>
<feature type="site" description="Cleavage in virion (by viral protease)" evidence="2">
    <location>
        <begin position="150"/>
        <end position="151"/>
    </location>
</feature>
<feature type="modified residue" description="Phosphothreonine; by host MAP4K1" evidence="2">
    <location>
        <position position="96"/>
    </location>
</feature>
<feature type="modified residue" description="Phosphoserine; by host MAP4K1" evidence="2">
    <location>
        <position position="165"/>
    </location>
</feature>
<accession>Q79667</accession>
<evidence type="ECO:0000250" key="1">
    <source>
        <dbReference type="UniProtKB" id="O70897"/>
    </source>
</evidence>
<evidence type="ECO:0000255" key="2">
    <source>
        <dbReference type="HAMAP-Rule" id="MF_04081"/>
    </source>
</evidence>
<reference key="1">
    <citation type="journal article" date="1994" name="J. Virol.">
        <title>A new subtype of human immunodeficiency virus type 1 (MVP-5180) from Cameroon.</title>
        <authorList>
            <person name="Gurtler L.G."/>
            <person name="Hauser P.H."/>
            <person name="Eberle J."/>
            <person name="von Brunn A."/>
            <person name="Knapp S."/>
            <person name="Zekeng L."/>
            <person name="Tsague J.M."/>
            <person name="Kaptue L."/>
        </authorList>
    </citation>
    <scope>NUCLEOTIDE SEQUENCE [GENOMIC DNA]</scope>
</reference>
<protein>
    <recommendedName>
        <fullName evidence="2">Virion infectivity factor</fullName>
        <shortName evidence="2">Vif</shortName>
    </recommendedName>
    <alternativeName>
        <fullName evidence="2">SOR protein</fullName>
    </alternativeName>
    <component>
        <recommendedName>
            <fullName evidence="2">p17</fullName>
        </recommendedName>
    </component>
    <component>
        <recommendedName>
            <fullName evidence="2">p7</fullName>
        </recommendedName>
    </component>
</protein>
<proteinExistence type="inferred from homology"/>
<keyword id="KW-0014">AIDS</keyword>
<keyword id="KW-1032">Host cell membrane</keyword>
<keyword id="KW-1035">Host cytoplasm</keyword>
<keyword id="KW-1043">Host membrane</keyword>
<keyword id="KW-0945">Host-virus interaction</keyword>
<keyword id="KW-0472">Membrane</keyword>
<keyword id="KW-0479">Metal-binding</keyword>
<keyword id="KW-0597">Phosphoprotein</keyword>
<keyword id="KW-0694">RNA-binding</keyword>
<keyword id="KW-0832">Ubl conjugation</keyword>
<keyword id="KW-0833">Ubl conjugation pathway</keyword>
<keyword id="KW-0946">Virion</keyword>
<keyword id="KW-0862">Zinc</keyword>